<feature type="signal peptide" evidence="4 5">
    <location>
        <begin position="1"/>
        <end position="20"/>
    </location>
</feature>
<feature type="chain" id="PRO_0000004260" description="Carbonic anhydrase 2">
    <location>
        <begin position="21"/>
        <end position="380"/>
    </location>
</feature>
<feature type="chain" id="PRO_0000004261" description="Carbonic anhydrase 2 large chain">
    <location>
        <begin position="21"/>
        <end position="343" status="uncertain"/>
    </location>
</feature>
<feature type="chain" id="PRO_0000004262" description="Carbonic anhydrase 2 small chain">
    <location>
        <begin position="344"/>
        <end position="380"/>
    </location>
</feature>
<feature type="domain" description="Alpha-carbonic anhydrase" evidence="3">
    <location>
        <begin position="38"/>
        <end position="322"/>
    </location>
</feature>
<feature type="active site" description="Proton acceptor" evidence="3">
    <location>
        <position position="112"/>
    </location>
</feature>
<feature type="binding site" evidence="3">
    <location>
        <position position="163"/>
    </location>
    <ligand>
        <name>Zn(2+)</name>
        <dbReference type="ChEBI" id="CHEBI:29105"/>
        <note>catalytic</note>
    </ligand>
</feature>
<feature type="binding site" evidence="3">
    <location>
        <position position="165"/>
    </location>
    <ligand>
        <name>Zn(2+)</name>
        <dbReference type="ChEBI" id="CHEBI:29105"/>
        <note>catalytic</note>
    </ligand>
</feature>
<feature type="binding site" evidence="3">
    <location>
        <position position="182"/>
    </location>
    <ligand>
        <name>Zn(2+)</name>
        <dbReference type="ChEBI" id="CHEBI:29105"/>
        <note>catalytic</note>
    </ligand>
</feature>
<feature type="binding site" evidence="1">
    <location>
        <begin position="260"/>
        <end position="261"/>
    </location>
    <ligand>
        <name>substrate</name>
    </ligand>
</feature>
<feature type="glycosylation site" description="N-linked (GlcNAc...) asparagine" evidence="2">
    <location>
        <position position="101"/>
    </location>
</feature>
<feature type="glycosylation site" description="N-linked (GlcNAc...) asparagine" evidence="2">
    <location>
        <position position="135"/>
    </location>
</feature>
<feature type="glycosylation site" description="N-linked (GlcNAc...) asparagine" evidence="2">
    <location>
        <position position="297"/>
    </location>
</feature>
<feature type="disulfide bond" description="Interchain" evidence="1">
    <location>
        <position position="21"/>
    </location>
</feature>
<feature type="disulfide bond" evidence="1">
    <location>
        <begin position="61"/>
        <end position="264"/>
    </location>
</feature>
<feature type="disulfide bond" evidence="1">
    <location>
        <begin position="194"/>
        <end position="198"/>
    </location>
</feature>
<feature type="disulfide bond" description="Interchain (between large and small chains)" evidence="1">
    <location>
        <begin position="296"/>
        <end position="354"/>
    </location>
</feature>
<feature type="sequence conflict" description="In Ref. 1; CAA38360." evidence="7" ref="1">
    <location>
        <begin position="220"/>
        <end position="225"/>
    </location>
</feature>
<accession>P24258</accession>
<comment type="function">
    <text>Reversible hydration of carbon dioxide.</text>
</comment>
<comment type="catalytic activity">
    <reaction>
        <text>hydrogencarbonate + H(+) = CO2 + H2O</text>
        <dbReference type="Rhea" id="RHEA:10748"/>
        <dbReference type="ChEBI" id="CHEBI:15377"/>
        <dbReference type="ChEBI" id="CHEBI:15378"/>
        <dbReference type="ChEBI" id="CHEBI:16526"/>
        <dbReference type="ChEBI" id="CHEBI:17544"/>
        <dbReference type="EC" id="4.2.1.1"/>
    </reaction>
</comment>
<comment type="cofactor">
    <cofactor>
        <name>Zn(2+)</name>
        <dbReference type="ChEBI" id="CHEBI:29105"/>
    </cofactor>
</comment>
<comment type="subunit">
    <text>Tetramer of two large and two small subunits linked by two disulfide bonds.</text>
</comment>
<comment type="subcellular location">
    <subcellularLocation>
        <location>Periplasm</location>
    </subcellularLocation>
</comment>
<comment type="induction">
    <text evidence="6">Expressed under high-CO2 condition.</text>
</comment>
<comment type="similarity">
    <text evidence="7">Belongs to the alpha-carbonic anhydrase family.</text>
</comment>
<keyword id="KW-0903">Direct protein sequencing</keyword>
<keyword id="KW-1015">Disulfide bond</keyword>
<keyword id="KW-0325">Glycoprotein</keyword>
<keyword id="KW-0456">Lyase</keyword>
<keyword id="KW-0479">Metal-binding</keyword>
<keyword id="KW-0574">Periplasm</keyword>
<keyword id="KW-0732">Signal</keyword>
<keyword id="KW-0862">Zinc</keyword>
<organism>
    <name type="scientific">Chlamydomonas reinhardtii</name>
    <name type="common">Chlamydomonas smithii</name>
    <dbReference type="NCBI Taxonomy" id="3055"/>
    <lineage>
        <taxon>Eukaryota</taxon>
        <taxon>Viridiplantae</taxon>
        <taxon>Chlorophyta</taxon>
        <taxon>core chlorophytes</taxon>
        <taxon>Chlorophyceae</taxon>
        <taxon>CS clade</taxon>
        <taxon>Chlamydomonadales</taxon>
        <taxon>Chlamydomonadaceae</taxon>
        <taxon>Chlamydomonas</taxon>
    </lineage>
</organism>
<protein>
    <recommendedName>
        <fullName>Carbonic anhydrase 2</fullName>
        <ecNumber>4.2.1.1</ecNumber>
    </recommendedName>
    <alternativeName>
        <fullName>Carbonate dehydratase 2</fullName>
        <shortName>CA2</shortName>
    </alternativeName>
    <component>
        <recommendedName>
            <fullName>Carbonic anhydrase 2 large chain</fullName>
        </recommendedName>
    </component>
    <component>
        <recommendedName>
            <fullName>Carbonic anhydrase 2 small chain</fullName>
        </recommendedName>
    </component>
</protein>
<proteinExistence type="evidence at protein level"/>
<evidence type="ECO:0000250" key="1"/>
<evidence type="ECO:0000255" key="2"/>
<evidence type="ECO:0000255" key="3">
    <source>
        <dbReference type="PROSITE-ProRule" id="PRU01134"/>
    </source>
</evidence>
<evidence type="ECO:0000269" key="4">
    <source>
    </source>
</evidence>
<evidence type="ECO:0000269" key="5">
    <source>
    </source>
</evidence>
<evidence type="ECO:0000269" key="6">
    <source>
    </source>
</evidence>
<evidence type="ECO:0000305" key="7"/>
<dbReference type="EC" id="4.2.1.1"/>
<dbReference type="EMBL" id="X54488">
    <property type="protein sequence ID" value="CAA38360.1"/>
    <property type="molecule type" value="Genomic_DNA"/>
</dbReference>
<dbReference type="PIR" id="S14188">
    <property type="entry name" value="S14188"/>
</dbReference>
<dbReference type="RefSeq" id="XP_001692290.1">
    <property type="nucleotide sequence ID" value="XM_001692238.1"/>
</dbReference>
<dbReference type="SMR" id="P24258"/>
<dbReference type="GlyCosmos" id="P24258">
    <property type="glycosylation" value="3 sites, No reported glycans"/>
</dbReference>
<dbReference type="PaxDb" id="3055-EDP04240"/>
<dbReference type="EnsemblPlants" id="PNW84146">
    <property type="protein sequence ID" value="PNW84146"/>
    <property type="gene ID" value="CHLRE_04g223050v5"/>
</dbReference>
<dbReference type="Gramene" id="PNW84146">
    <property type="protein sequence ID" value="PNW84146"/>
    <property type="gene ID" value="CHLRE_04g223050v5"/>
</dbReference>
<dbReference type="KEGG" id="cre:CHLRE_04g223050v5"/>
<dbReference type="eggNOG" id="KOG0382">
    <property type="taxonomic scope" value="Eukaryota"/>
</dbReference>
<dbReference type="HOGENOM" id="CLU_728358_0_0_1"/>
<dbReference type="OMA" id="MRPNDAS"/>
<dbReference type="OrthoDB" id="545904at2759"/>
<dbReference type="GO" id="GO:0004089">
    <property type="term" value="F:carbonate dehydratase activity"/>
    <property type="evidence" value="ECO:0007669"/>
    <property type="project" value="UniProtKB-EC"/>
</dbReference>
<dbReference type="GO" id="GO:0008270">
    <property type="term" value="F:zinc ion binding"/>
    <property type="evidence" value="ECO:0007669"/>
    <property type="project" value="InterPro"/>
</dbReference>
<dbReference type="CDD" id="cd03124">
    <property type="entry name" value="alpha_CA_prokaryotic_like"/>
    <property type="match status" value="1"/>
</dbReference>
<dbReference type="Gene3D" id="3.10.200.10">
    <property type="entry name" value="Alpha carbonic anhydrase"/>
    <property type="match status" value="1"/>
</dbReference>
<dbReference type="InterPro" id="IPR041891">
    <property type="entry name" value="Alpha_CA_prokaryot-like"/>
</dbReference>
<dbReference type="InterPro" id="IPR001148">
    <property type="entry name" value="CA_dom"/>
</dbReference>
<dbReference type="InterPro" id="IPR036398">
    <property type="entry name" value="CA_dom_sf"/>
</dbReference>
<dbReference type="InterPro" id="IPR023561">
    <property type="entry name" value="Carbonic_anhydrase_a-class"/>
</dbReference>
<dbReference type="InterPro" id="IPR018338">
    <property type="entry name" value="Carbonic_anhydrase_a-class_CS"/>
</dbReference>
<dbReference type="PANTHER" id="PTHR18952">
    <property type="entry name" value="CARBONIC ANHYDRASE"/>
    <property type="match status" value="1"/>
</dbReference>
<dbReference type="PANTHER" id="PTHR18952:SF265">
    <property type="entry name" value="CARBONIC ANHYDRASE"/>
    <property type="match status" value="1"/>
</dbReference>
<dbReference type="Pfam" id="PF00194">
    <property type="entry name" value="Carb_anhydrase"/>
    <property type="match status" value="1"/>
</dbReference>
<dbReference type="SMART" id="SM01057">
    <property type="entry name" value="Carb_anhydrase"/>
    <property type="match status" value="1"/>
</dbReference>
<dbReference type="SUPFAM" id="SSF51069">
    <property type="entry name" value="Carbonic anhydrase"/>
    <property type="match status" value="1"/>
</dbReference>
<dbReference type="PROSITE" id="PS00162">
    <property type="entry name" value="ALPHA_CA_1"/>
    <property type="match status" value="1"/>
</dbReference>
<dbReference type="PROSITE" id="PS51144">
    <property type="entry name" value="ALPHA_CA_2"/>
    <property type="match status" value="1"/>
</dbReference>
<gene>
    <name type="primary">CAH2</name>
</gene>
<reference key="1">
    <citation type="journal article" date="1990" name="Nucleic Acids Res.">
        <title>Nucleotide sequences of two genes CAH1 and CAH2 which encode carbonic anhydrase polypeptides in Chlamydomonas reinhardtii.</title>
        <authorList>
            <person name="Fukuzawa H."/>
            <person name="Fujiwara S."/>
            <person name="Tachiki A."/>
            <person name="Miyachi S."/>
        </authorList>
    </citation>
    <scope>NUCLEOTIDE SEQUENCE [GENOMIC DNA]</scope>
    <source>
        <strain>IAM C-9</strain>
    </source>
</reference>
<reference key="2">
    <citation type="journal article" date="1990" name="Proc. Natl. Acad. Sci. U.S.A.">
        <title>Structure and differential expression of two genes encoding carbonic anhydrase in Chlamydomonas reinhardtii.</title>
        <authorList>
            <person name="Fujiwara S."/>
            <person name="Fukuzawa H."/>
            <person name="Tachiki A."/>
            <person name="Miyachi S."/>
        </authorList>
    </citation>
    <scope>NUCLEOTIDE SEQUENCE [GENOMIC DNA]</scope>
    <scope>INDUCTION</scope>
</reference>
<reference key="3">
    <citation type="journal article" date="1991" name="J. Biol. Chem.">
        <title>Partial characterization of a new isoenzyme of carbonic anhydrase isolated from Chlamydomonas reinhardtii.</title>
        <authorList>
            <person name="Rawat M."/>
            <person name="Moroney J.V."/>
        </authorList>
    </citation>
    <scope>PROTEIN SEQUENCE OF 21-41 AND 344-363</scope>
</reference>
<reference key="4">
    <citation type="journal article" date="1992" name="Biosci. Biotechnol. Biochem.">
        <title>Characterization of carbonic anhydrase isozyme CA2, which is the CAH2 gene product, in Chlamydomonas reinhardtii.</title>
        <authorList>
            <person name="Tachiki A."/>
            <person name="Fukuzawa H."/>
            <person name="Miyachi S."/>
        </authorList>
    </citation>
    <scope>PROTEIN SEQUENCE OF 21-41 AND 344-364</scope>
    <scope>CHARACTERIZATION</scope>
</reference>
<name>CAH2_CHLRE</name>
<sequence>MARTGALLLAALALAGCAQACIYKFGTSPDSKATHTGDHWDHSLNGENWEGKDGAGNPWVCKTGRKQSPINVPQYHVLDGKGSKIATGLQTQWSYPDLMSNGSSVQVINNGHTIQVQWTYDYAGHATIAIPAMRNQSNRIVDVLEMRPNDASDRVTAVPTQFHFHSTSEHLLAGKIFPLELHIVHKVTDKLEACKGGCFSVTGILFQLDNGPDNELLEPIFANMPTREGTFTNLPAGTTIKLGELLPSDRDYVTYEGSLTTPPCSEGLLWHVMTQPQRISFGQWNRYRLAVGEKECNSTETDAAHADAGHHHHHHRRLLHNHAHLEEVPAATSEPKHYFRRVMEETENPDAYTCTTVAFGQNFRNAQYANGRTIKLARYE</sequence>